<gene>
    <name type="primary">PDA1</name>
    <name type="ordered locus">KLLA0F12001g</name>
</gene>
<protein>
    <recommendedName>
        <fullName>Pyruvate dehydrogenase E1 component subunit alpha, mitochondrial</fullName>
        <shortName>PDHE1-A</shortName>
        <ecNumber>1.2.4.1</ecNumber>
    </recommendedName>
</protein>
<reference key="1">
    <citation type="journal article" date="1998" name="Microbiology">
        <title>Inactivation of the Kluyveromyces lactis KlPDA1 gene leads to loss of pyruvate dehydrogenase activity, impairs growth on glucose and triggers aerobic alcoholic fermentation.</title>
        <authorList>
            <person name="Zeeman A.-M."/>
            <person name="Luttik M.A.H."/>
            <person name="Thiele C."/>
            <person name="van Dijken J.P."/>
            <person name="Pronk J.T."/>
            <person name="Steensma H.Y."/>
        </authorList>
    </citation>
    <scope>NUCLEOTIDE SEQUENCE [GENOMIC DNA]</scope>
    <source>
        <strain>ATCC MYA-539 / JBD100</strain>
    </source>
</reference>
<reference key="2">
    <citation type="journal article" date="2004" name="Nature">
        <title>Genome evolution in yeasts.</title>
        <authorList>
            <person name="Dujon B."/>
            <person name="Sherman D."/>
            <person name="Fischer G."/>
            <person name="Durrens P."/>
            <person name="Casaregola S."/>
            <person name="Lafontaine I."/>
            <person name="de Montigny J."/>
            <person name="Marck C."/>
            <person name="Neuveglise C."/>
            <person name="Talla E."/>
            <person name="Goffard N."/>
            <person name="Frangeul L."/>
            <person name="Aigle M."/>
            <person name="Anthouard V."/>
            <person name="Babour A."/>
            <person name="Barbe V."/>
            <person name="Barnay S."/>
            <person name="Blanchin S."/>
            <person name="Beckerich J.-M."/>
            <person name="Beyne E."/>
            <person name="Bleykasten C."/>
            <person name="Boisrame A."/>
            <person name="Boyer J."/>
            <person name="Cattolico L."/>
            <person name="Confanioleri F."/>
            <person name="de Daruvar A."/>
            <person name="Despons L."/>
            <person name="Fabre E."/>
            <person name="Fairhead C."/>
            <person name="Ferry-Dumazet H."/>
            <person name="Groppi A."/>
            <person name="Hantraye F."/>
            <person name="Hennequin C."/>
            <person name="Jauniaux N."/>
            <person name="Joyet P."/>
            <person name="Kachouri R."/>
            <person name="Kerrest A."/>
            <person name="Koszul R."/>
            <person name="Lemaire M."/>
            <person name="Lesur I."/>
            <person name="Ma L."/>
            <person name="Muller H."/>
            <person name="Nicaud J.-M."/>
            <person name="Nikolski M."/>
            <person name="Oztas S."/>
            <person name="Ozier-Kalogeropoulos O."/>
            <person name="Pellenz S."/>
            <person name="Potier S."/>
            <person name="Richard G.-F."/>
            <person name="Straub M.-L."/>
            <person name="Suleau A."/>
            <person name="Swennen D."/>
            <person name="Tekaia F."/>
            <person name="Wesolowski-Louvel M."/>
            <person name="Westhof E."/>
            <person name="Wirth B."/>
            <person name="Zeniou-Meyer M."/>
            <person name="Zivanovic Y."/>
            <person name="Bolotin-Fukuhara M."/>
            <person name="Thierry A."/>
            <person name="Bouchier C."/>
            <person name="Caudron B."/>
            <person name="Scarpelli C."/>
            <person name="Gaillardin C."/>
            <person name="Weissenbach J."/>
            <person name="Wincker P."/>
            <person name="Souciet J.-L."/>
        </authorList>
    </citation>
    <scope>NUCLEOTIDE SEQUENCE [LARGE SCALE GENOMIC DNA]</scope>
    <source>
        <strain>ATCC 8585 / CBS 2359 / DSM 70799 / NBRC 1267 / NRRL Y-1140 / WM37</strain>
    </source>
</reference>
<comment type="function">
    <text>The pyruvate dehydrogenase complex catalyzes the overall conversion of pyruvate to acetyl-CoA and CO(2). It contains multiple copies of three enzymatic components: pyruvate dehydrogenase (E1), dihydrolipoamide acetyltransferase (E2) and lipoamide dehydrogenase (E3).</text>
</comment>
<comment type="catalytic activity">
    <reaction>
        <text>N(6)-[(R)-lipoyl]-L-lysyl-[protein] + pyruvate + H(+) = N(6)-[(R)-S(8)-acetyldihydrolipoyl]-L-lysyl-[protein] + CO2</text>
        <dbReference type="Rhea" id="RHEA:19189"/>
        <dbReference type="Rhea" id="RHEA-COMP:10474"/>
        <dbReference type="Rhea" id="RHEA-COMP:10478"/>
        <dbReference type="ChEBI" id="CHEBI:15361"/>
        <dbReference type="ChEBI" id="CHEBI:15378"/>
        <dbReference type="ChEBI" id="CHEBI:16526"/>
        <dbReference type="ChEBI" id="CHEBI:83099"/>
        <dbReference type="ChEBI" id="CHEBI:83111"/>
        <dbReference type="EC" id="1.2.4.1"/>
    </reaction>
</comment>
<comment type="cofactor">
    <cofactor evidence="2">
        <name>thiamine diphosphate</name>
        <dbReference type="ChEBI" id="CHEBI:58937"/>
    </cofactor>
    <cofactor evidence="2">
        <name>Mg(2+)</name>
        <dbReference type="ChEBI" id="CHEBI:18420"/>
    </cofactor>
</comment>
<comment type="activity regulation">
    <text evidence="1">E1 activity is regulated by phosphorylation (inactivation) and dephosphorylation (activation) of the alpha subunit.</text>
</comment>
<comment type="subunit">
    <text evidence="1">Tetramer of 2 alpha and 2 beta subunits.</text>
</comment>
<comment type="subcellular location">
    <subcellularLocation>
        <location evidence="1">Mitochondrion matrix</location>
    </subcellularLocation>
</comment>
<organism>
    <name type="scientific">Kluyveromyces lactis (strain ATCC 8585 / CBS 2359 / DSM 70799 / NBRC 1267 / NRRL Y-1140 / WM37)</name>
    <name type="common">Yeast</name>
    <name type="synonym">Candida sphaerica</name>
    <dbReference type="NCBI Taxonomy" id="284590"/>
    <lineage>
        <taxon>Eukaryota</taxon>
        <taxon>Fungi</taxon>
        <taxon>Dikarya</taxon>
        <taxon>Ascomycota</taxon>
        <taxon>Saccharomycotina</taxon>
        <taxon>Saccharomycetes</taxon>
        <taxon>Saccharomycetales</taxon>
        <taxon>Saccharomycetaceae</taxon>
        <taxon>Kluyveromyces</taxon>
    </lineage>
</organism>
<feature type="transit peptide" description="Mitochondrion" evidence="3">
    <location>
        <begin position="1"/>
        <end status="unknown"/>
    </location>
</feature>
<feature type="chain" id="PRO_0000020450" description="Pyruvate dehydrogenase E1 component subunit alpha, mitochondrial">
    <location>
        <begin status="unknown"/>
        <end position="412"/>
    </location>
</feature>
<feature type="binding site" evidence="2">
    <location>
        <position position="104"/>
    </location>
    <ligand>
        <name>pyruvate</name>
        <dbReference type="ChEBI" id="CHEBI:15361"/>
    </ligand>
</feature>
<feature type="binding site" evidence="2">
    <location>
        <position position="130"/>
    </location>
    <ligand>
        <name>pyruvate</name>
        <dbReference type="ChEBI" id="CHEBI:15361"/>
    </ligand>
</feature>
<feature type="binding site" evidence="2">
    <location>
        <position position="130"/>
    </location>
    <ligand>
        <name>thiamine diphosphate</name>
        <dbReference type="ChEBI" id="CHEBI:58937"/>
        <note>ligand shared with beta subunit</note>
    </ligand>
</feature>
<feature type="binding site" evidence="2">
    <location>
        <position position="131"/>
    </location>
    <ligand>
        <name>pyruvate</name>
        <dbReference type="ChEBI" id="CHEBI:15361"/>
    </ligand>
</feature>
<feature type="binding site" evidence="2">
    <location>
        <position position="131"/>
    </location>
    <ligand>
        <name>thiamine diphosphate</name>
        <dbReference type="ChEBI" id="CHEBI:58937"/>
        <note>ligand shared with beta subunit</note>
    </ligand>
</feature>
<feature type="binding site" evidence="2">
    <location>
        <position position="169"/>
    </location>
    <ligand>
        <name>pyruvate</name>
        <dbReference type="ChEBI" id="CHEBI:15361"/>
    </ligand>
</feature>
<feature type="binding site" evidence="2">
    <location>
        <position position="177"/>
    </location>
    <ligand>
        <name>pyruvate</name>
        <dbReference type="ChEBI" id="CHEBI:15361"/>
    </ligand>
</feature>
<feature type="binding site" evidence="2">
    <location>
        <position position="177"/>
    </location>
    <ligand>
        <name>thiamine diphosphate</name>
        <dbReference type="ChEBI" id="CHEBI:58937"/>
        <note>ligand shared with beta subunit</note>
    </ligand>
</feature>
<feature type="binding site" evidence="2">
    <location>
        <position position="179"/>
    </location>
    <ligand>
        <name>pyruvate</name>
        <dbReference type="ChEBI" id="CHEBI:15361"/>
    </ligand>
</feature>
<feature type="binding site" evidence="2">
    <location>
        <position position="179"/>
    </location>
    <ligand>
        <name>thiamine diphosphate</name>
        <dbReference type="ChEBI" id="CHEBI:58937"/>
        <note>ligand shared with beta subunit</note>
    </ligand>
</feature>
<feature type="binding site" evidence="2">
    <location>
        <position position="208"/>
    </location>
    <ligand>
        <name>Mg(2+)</name>
        <dbReference type="ChEBI" id="CHEBI:18420"/>
    </ligand>
</feature>
<feature type="binding site" evidence="2">
    <location>
        <position position="208"/>
    </location>
    <ligand>
        <name>pyruvate</name>
        <dbReference type="ChEBI" id="CHEBI:15361"/>
    </ligand>
</feature>
<feature type="binding site" evidence="2">
    <location>
        <position position="208"/>
    </location>
    <ligand>
        <name>thiamine diphosphate</name>
        <dbReference type="ChEBI" id="CHEBI:58937"/>
        <note>ligand shared with beta subunit</note>
    </ligand>
</feature>
<feature type="binding site" evidence="2">
    <location>
        <position position="209"/>
    </location>
    <ligand>
        <name>pyruvate</name>
        <dbReference type="ChEBI" id="CHEBI:15361"/>
    </ligand>
</feature>
<feature type="binding site" evidence="2">
    <location>
        <position position="209"/>
    </location>
    <ligand>
        <name>thiamine diphosphate</name>
        <dbReference type="ChEBI" id="CHEBI:58937"/>
        <note>ligand shared with beta subunit</note>
    </ligand>
</feature>
<feature type="binding site" evidence="2">
    <location>
        <position position="210"/>
    </location>
    <ligand>
        <name>pyruvate</name>
        <dbReference type="ChEBI" id="CHEBI:15361"/>
    </ligand>
</feature>
<feature type="binding site" evidence="2">
    <location>
        <position position="210"/>
    </location>
    <ligand>
        <name>thiamine diphosphate</name>
        <dbReference type="ChEBI" id="CHEBI:58937"/>
        <note>ligand shared with beta subunit</note>
    </ligand>
</feature>
<feature type="binding site" evidence="2">
    <location>
        <position position="237"/>
    </location>
    <ligand>
        <name>Mg(2+)</name>
        <dbReference type="ChEBI" id="CHEBI:18420"/>
    </ligand>
</feature>
<feature type="binding site" evidence="2">
    <location>
        <position position="237"/>
    </location>
    <ligand>
        <name>pyruvate</name>
        <dbReference type="ChEBI" id="CHEBI:15361"/>
    </ligand>
</feature>
<feature type="binding site" evidence="2">
    <location>
        <position position="237"/>
    </location>
    <ligand>
        <name>thiamine diphosphate</name>
        <dbReference type="ChEBI" id="CHEBI:58937"/>
        <note>ligand shared with beta subunit</note>
    </ligand>
</feature>
<feature type="binding site" evidence="2">
    <location>
        <position position="239"/>
    </location>
    <ligand>
        <name>Mg(2+)</name>
        <dbReference type="ChEBI" id="CHEBI:18420"/>
    </ligand>
</feature>
<feature type="binding site" evidence="2">
    <location>
        <position position="239"/>
    </location>
    <ligand>
        <name>pyruvate</name>
        <dbReference type="ChEBI" id="CHEBI:15361"/>
    </ligand>
</feature>
<feature type="binding site" evidence="2">
    <location>
        <position position="304"/>
    </location>
    <ligand>
        <name>thiamine diphosphate</name>
        <dbReference type="ChEBI" id="CHEBI:58937"/>
        <note>ligand shared with beta subunit</note>
    </ligand>
</feature>
<feature type="sequence conflict" description="In Ref. 1; AAD03773." evidence="4" ref="1">
    <original>YQASKFA</original>
    <variation>TKL</variation>
    <location>
        <begin position="275"/>
        <end position="281"/>
    </location>
</feature>
<sequence>MLSLKAQSSVVGKSSSLRLVRNFSKNVRALSQVADETKPGDDDLVQIDLPETSFEGYLLDVPELSYQTTKSNLLQMYKDMIIVRRMEMACDALYKAKKIRGFCHSSVGQEAIAVGIENAITKRDTVITSYRCHGFTYMRGAAVQAVLAELMGRRTGVSFGKGGSMHLYAPGFYGGNGIVGAQVPLGAGLAFAHQYKHEDACSFALYGDGASNQGQVFESFNMAKLWNLPAVFCCENNKYGMGTAAARSSAMTEYFKRGQYIPGLKVNGMDILAVYQASKFAKDWTVSGNGPIVLEYETYRYGGHSMSDPGTTYRTRDEIQHMRSKNDPIAGLKMHLLELGIATEDEIKAYDKAARKYVDEQVELADAAPAPEAKMSILFEDVYVPGSETPTLRGRLQEDTWDFAKKSFAFRD</sequence>
<name>ODPA_KLULA</name>
<keyword id="KW-0460">Magnesium</keyword>
<keyword id="KW-0479">Metal-binding</keyword>
<keyword id="KW-0496">Mitochondrion</keyword>
<keyword id="KW-0560">Oxidoreductase</keyword>
<keyword id="KW-0597">Phosphoprotein</keyword>
<keyword id="KW-0670">Pyruvate</keyword>
<keyword id="KW-1185">Reference proteome</keyword>
<keyword id="KW-0786">Thiamine pyrophosphate</keyword>
<keyword id="KW-0809">Transit peptide</keyword>
<proteinExistence type="inferred from homology"/>
<dbReference type="EC" id="1.2.4.1"/>
<dbReference type="EMBL" id="AF023920">
    <property type="protein sequence ID" value="AAD03773.1"/>
    <property type="molecule type" value="Genomic_DNA"/>
</dbReference>
<dbReference type="EMBL" id="CR382126">
    <property type="protein sequence ID" value="CAG98332.1"/>
    <property type="molecule type" value="Genomic_DNA"/>
</dbReference>
<dbReference type="RefSeq" id="XP_455624.1">
    <property type="nucleotide sequence ID" value="XM_455624.1"/>
</dbReference>
<dbReference type="SMR" id="O13366"/>
<dbReference type="FunCoup" id="O13366">
    <property type="interactions" value="705"/>
</dbReference>
<dbReference type="STRING" id="284590.O13366"/>
<dbReference type="PaxDb" id="284590-O13366"/>
<dbReference type="KEGG" id="kla:KLLA0_F12001g"/>
<dbReference type="eggNOG" id="KOG0225">
    <property type="taxonomic scope" value="Eukaryota"/>
</dbReference>
<dbReference type="HOGENOM" id="CLU_029393_5_2_1"/>
<dbReference type="InParanoid" id="O13366"/>
<dbReference type="OMA" id="LGYEMPC"/>
<dbReference type="Proteomes" id="UP000000598">
    <property type="component" value="Chromosome F"/>
</dbReference>
<dbReference type="GO" id="GO:0005759">
    <property type="term" value="C:mitochondrial matrix"/>
    <property type="evidence" value="ECO:0007669"/>
    <property type="project" value="UniProtKB-SubCell"/>
</dbReference>
<dbReference type="GO" id="GO:0046872">
    <property type="term" value="F:metal ion binding"/>
    <property type="evidence" value="ECO:0007669"/>
    <property type="project" value="UniProtKB-KW"/>
</dbReference>
<dbReference type="GO" id="GO:0004739">
    <property type="term" value="F:pyruvate dehydrogenase (acetyl-transferring) activity"/>
    <property type="evidence" value="ECO:0007669"/>
    <property type="project" value="UniProtKB-EC"/>
</dbReference>
<dbReference type="GO" id="GO:0006086">
    <property type="term" value="P:pyruvate decarboxylation to acetyl-CoA"/>
    <property type="evidence" value="ECO:0007669"/>
    <property type="project" value="InterPro"/>
</dbReference>
<dbReference type="CDD" id="cd02000">
    <property type="entry name" value="TPP_E1_PDC_ADC_BCADC"/>
    <property type="match status" value="1"/>
</dbReference>
<dbReference type="FunFam" id="3.40.50.970:FF:000013">
    <property type="entry name" value="Pyruvate dehydrogenase E1 component subunit alpha"/>
    <property type="match status" value="1"/>
</dbReference>
<dbReference type="Gene3D" id="3.40.50.970">
    <property type="match status" value="1"/>
</dbReference>
<dbReference type="InterPro" id="IPR001017">
    <property type="entry name" value="DH_E1"/>
</dbReference>
<dbReference type="InterPro" id="IPR050642">
    <property type="entry name" value="PDH_E1_Alpha_Subunit"/>
</dbReference>
<dbReference type="InterPro" id="IPR017597">
    <property type="entry name" value="Pyrv_DH_E1_asu_subgrp-y"/>
</dbReference>
<dbReference type="InterPro" id="IPR029061">
    <property type="entry name" value="THDP-binding"/>
</dbReference>
<dbReference type="NCBIfam" id="TIGR03182">
    <property type="entry name" value="PDH_E1_alph_y"/>
    <property type="match status" value="1"/>
</dbReference>
<dbReference type="PANTHER" id="PTHR11516:SF60">
    <property type="entry name" value="PYRUVATE DEHYDROGENASE E1 COMPONENT SUBUNIT ALPHA"/>
    <property type="match status" value="1"/>
</dbReference>
<dbReference type="PANTHER" id="PTHR11516">
    <property type="entry name" value="PYRUVATE DEHYDROGENASE E1 COMPONENT, ALPHA SUBUNIT BACTERIAL AND ORGANELLAR"/>
    <property type="match status" value="1"/>
</dbReference>
<dbReference type="Pfam" id="PF00676">
    <property type="entry name" value="E1_dh"/>
    <property type="match status" value="1"/>
</dbReference>
<dbReference type="SUPFAM" id="SSF52518">
    <property type="entry name" value="Thiamin diphosphate-binding fold (THDP-binding)"/>
    <property type="match status" value="1"/>
</dbReference>
<evidence type="ECO:0000250" key="1"/>
<evidence type="ECO:0000250" key="2">
    <source>
        <dbReference type="UniProtKB" id="P08559"/>
    </source>
</evidence>
<evidence type="ECO:0000255" key="3"/>
<evidence type="ECO:0000305" key="4"/>
<accession>O13366</accession>
<accession>Q6CKB5</accession>